<name>RAD18_NEUCR</name>
<comment type="function">
    <text evidence="1">E3 RING-finger protein, member of the UBC2/RAD6 epistasis group. Associates to the E2 ubiquitin conjugating enzyme mus-8/ubc2 to form the mus-8/ubc2-uvs-2/rad18 ubiquitin ligase complex involved in postreplicative repair (PRR) of damaged DNA.</text>
</comment>
<comment type="catalytic activity">
    <reaction>
        <text>S-ubiquitinyl-[E2 ubiquitin-conjugating enzyme]-L-cysteine + [acceptor protein]-L-lysine = [E2 ubiquitin-conjugating enzyme]-L-cysteine + N(6)-ubiquitinyl-[acceptor protein]-L-lysine.</text>
        <dbReference type="EC" id="2.3.2.27"/>
    </reaction>
</comment>
<comment type="pathway">
    <text>Protein modification; protein ubiquitination.</text>
</comment>
<comment type="subunit">
    <text evidence="1">Interacts with E2 mus-8/ubc2, forming a complex with ubiquitin ligase activity.</text>
</comment>
<comment type="subcellular location">
    <subcellularLocation>
        <location evidence="6">Nucleus</location>
    </subcellularLocation>
</comment>
<comment type="similarity">
    <text evidence="6">Belongs to the RAD18 family.</text>
</comment>
<proteinExistence type="inferred from homology"/>
<reference key="1">
    <citation type="journal article" date="1993" name="Mol. Gen. Genet.">
        <title>The Neurospora uvs-2 gene encodes a protein which has homology to yeast RAD18, with unique zinc finger motifs.</title>
        <authorList>
            <person name="Tomita H."/>
            <person name="Soshi T."/>
            <person name="Inoue H."/>
        </authorList>
    </citation>
    <scope>NUCLEOTIDE SEQUENCE [GENOMIC DNA]</scope>
    <source>
        <strain>C1-T10-34A</strain>
    </source>
</reference>
<reference key="2">
    <citation type="journal article" date="2003" name="Nature">
        <title>The genome sequence of the filamentous fungus Neurospora crassa.</title>
        <authorList>
            <person name="Galagan J.E."/>
            <person name="Calvo S.E."/>
            <person name="Borkovich K.A."/>
            <person name="Selker E.U."/>
            <person name="Read N.D."/>
            <person name="Jaffe D.B."/>
            <person name="FitzHugh W."/>
            <person name="Ma L.-J."/>
            <person name="Smirnov S."/>
            <person name="Purcell S."/>
            <person name="Rehman B."/>
            <person name="Elkins T."/>
            <person name="Engels R."/>
            <person name="Wang S."/>
            <person name="Nielsen C.B."/>
            <person name="Butler J."/>
            <person name="Endrizzi M."/>
            <person name="Qui D."/>
            <person name="Ianakiev P."/>
            <person name="Bell-Pedersen D."/>
            <person name="Nelson M.A."/>
            <person name="Werner-Washburne M."/>
            <person name="Selitrennikoff C.P."/>
            <person name="Kinsey J.A."/>
            <person name="Braun E.L."/>
            <person name="Zelter A."/>
            <person name="Schulte U."/>
            <person name="Kothe G.O."/>
            <person name="Jedd G."/>
            <person name="Mewes H.-W."/>
            <person name="Staben C."/>
            <person name="Marcotte E."/>
            <person name="Greenberg D."/>
            <person name="Roy A."/>
            <person name="Foley K."/>
            <person name="Naylor J."/>
            <person name="Stange-Thomann N."/>
            <person name="Barrett R."/>
            <person name="Gnerre S."/>
            <person name="Kamal M."/>
            <person name="Kamvysselis M."/>
            <person name="Mauceli E.W."/>
            <person name="Bielke C."/>
            <person name="Rudd S."/>
            <person name="Frishman D."/>
            <person name="Krystofova S."/>
            <person name="Rasmussen C."/>
            <person name="Metzenberg R.L."/>
            <person name="Perkins D.D."/>
            <person name="Kroken S."/>
            <person name="Cogoni C."/>
            <person name="Macino G."/>
            <person name="Catcheside D.E.A."/>
            <person name="Li W."/>
            <person name="Pratt R.J."/>
            <person name="Osmani S.A."/>
            <person name="DeSouza C.P.C."/>
            <person name="Glass N.L."/>
            <person name="Orbach M.J."/>
            <person name="Berglund J.A."/>
            <person name="Voelker R."/>
            <person name="Yarden O."/>
            <person name="Plamann M."/>
            <person name="Seiler S."/>
            <person name="Dunlap J.C."/>
            <person name="Radford A."/>
            <person name="Aramayo R."/>
            <person name="Natvig D.O."/>
            <person name="Alex L.A."/>
            <person name="Mannhaupt G."/>
            <person name="Ebbole D.J."/>
            <person name="Freitag M."/>
            <person name="Paulsen I."/>
            <person name="Sachs M.S."/>
            <person name="Lander E.S."/>
            <person name="Nusbaum C."/>
            <person name="Birren B.W."/>
        </authorList>
    </citation>
    <scope>NUCLEOTIDE SEQUENCE [LARGE SCALE GENOMIC DNA]</scope>
    <source>
        <strain>ATCC 24698 / 74-OR23-1A / CBS 708.71 / DSM 1257 / FGSC 987</strain>
    </source>
</reference>
<evidence type="ECO:0000250" key="1"/>
<evidence type="ECO:0000255" key="2">
    <source>
        <dbReference type="PROSITE-ProRule" id="PRU00175"/>
    </source>
</evidence>
<evidence type="ECO:0000255" key="3">
    <source>
        <dbReference type="PROSITE-ProRule" id="PRU00186"/>
    </source>
</evidence>
<evidence type="ECO:0000255" key="4">
    <source>
        <dbReference type="PROSITE-ProRule" id="PRU01256"/>
    </source>
</evidence>
<evidence type="ECO:0000256" key="5">
    <source>
        <dbReference type="SAM" id="MobiDB-lite"/>
    </source>
</evidence>
<evidence type="ECO:0000305" key="6"/>
<sequence length="501" mass="54777">MDVFGDEAFNVPDSTDWLGTPLACLMPVEQAFRCHVCKDFYDSPMLTSCNHTFCSLCIRRCLSVDSKCPLCRATDQESKLRGNWALREAVEAFKNSRKVLLEFARTPPTIQAILPDQAGPSSPSKRKATEMEGPKEEDPESKRPRRSTRSTRARAAELTAAILQEEQDTTPSADPDYVDQPPDDGLVACPICLTRMKEQQVDRHLDTSCPGSPQAASKRRPIPAQTPQPSTFPSFNTRLTSQTNQKPPERLPALAYSMLRDTALRKKLSELGLSTHGSRQLLEKRHKEWITLWNANCDSSRPKKRSELLRDLDEWERTVGNPGTAAGGGGGQQGLGLMARAQATGAQIKDKEFDGKAWATRYGGSFGDLIKQARQGIKRQTLDGNGEKADTKGGGGGEDVGPAELPTLQAREGESSAAPTRMDIVPPSSPPRPGQVDDADTEHDGQAPGKDAIAEDTAMREQVIPGTPDKERQWETSQQQQPPIPGDAQLSGMKKPNPETC</sequence>
<keyword id="KW-0227">DNA damage</keyword>
<keyword id="KW-0234">DNA repair</keyword>
<keyword id="KW-0238">DNA-binding</keyword>
<keyword id="KW-0479">Metal-binding</keyword>
<keyword id="KW-0539">Nucleus</keyword>
<keyword id="KW-1185">Reference proteome</keyword>
<keyword id="KW-0808">Transferase</keyword>
<keyword id="KW-0833">Ubl conjugation pathway</keyword>
<keyword id="KW-0862">Zinc</keyword>
<keyword id="KW-0863">Zinc-finger</keyword>
<protein>
    <recommendedName>
        <fullName>Postreplication repair E3 ubiquitin-protein ligase rad18</fullName>
        <ecNumber>2.3.2.27</ecNumber>
    </recommendedName>
    <alternativeName>
        <fullName evidence="6">RING-type E3 ubiquitin transferase rad18</fullName>
    </alternativeName>
    <alternativeName>
        <fullName>UV radiation sensitivity protein 2</fullName>
    </alternativeName>
</protein>
<feature type="chain" id="PRO_0000056158" description="Postreplication repair E3 ubiquitin-protein ligase rad18">
    <location>
        <begin position="1"/>
        <end position="501"/>
    </location>
</feature>
<feature type="domain" description="SAP" evidence="3">
    <location>
        <begin position="256"/>
        <end position="290"/>
    </location>
</feature>
<feature type="zinc finger region" description="RING-type" evidence="2">
    <location>
        <begin position="34"/>
        <end position="72"/>
    </location>
</feature>
<feature type="zinc finger region" description="UBZ4-type" evidence="4">
    <location>
        <begin position="186"/>
        <end position="214"/>
    </location>
</feature>
<feature type="region of interest" description="Disordered" evidence="5">
    <location>
        <begin position="111"/>
        <end position="154"/>
    </location>
</feature>
<feature type="region of interest" description="Disordered" evidence="5">
    <location>
        <begin position="203"/>
        <end position="250"/>
    </location>
</feature>
<feature type="region of interest" description="Disordered" evidence="5">
    <location>
        <begin position="377"/>
        <end position="501"/>
    </location>
</feature>
<feature type="compositionally biased region" description="Basic and acidic residues" evidence="5">
    <location>
        <begin position="127"/>
        <end position="142"/>
    </location>
</feature>
<feature type="compositionally biased region" description="Basic residues" evidence="5">
    <location>
        <begin position="143"/>
        <end position="152"/>
    </location>
</feature>
<feature type="compositionally biased region" description="Polar residues" evidence="5">
    <location>
        <begin position="225"/>
        <end position="246"/>
    </location>
</feature>
<feature type="binding site" evidence="4">
    <location>
        <position position="189"/>
    </location>
    <ligand>
        <name>Zn(2+)</name>
        <dbReference type="ChEBI" id="CHEBI:29105"/>
    </ligand>
</feature>
<feature type="binding site" evidence="4">
    <location>
        <position position="192"/>
    </location>
    <ligand>
        <name>Zn(2+)</name>
        <dbReference type="ChEBI" id="CHEBI:29105"/>
    </ligand>
</feature>
<feature type="binding site" evidence="4">
    <location>
        <position position="204"/>
    </location>
    <ligand>
        <name>Zn(2+)</name>
        <dbReference type="ChEBI" id="CHEBI:29105"/>
    </ligand>
</feature>
<feature type="binding site" evidence="4">
    <location>
        <position position="209"/>
    </location>
    <ligand>
        <name>Zn(2+)</name>
        <dbReference type="ChEBI" id="CHEBI:29105"/>
    </ligand>
</feature>
<feature type="sequence conflict" description="In Ref. 1; BAA02015." evidence="6" ref="1">
    <original>A</original>
    <variation>R</variation>
    <location>
        <position position="89"/>
    </location>
</feature>
<feature type="sequence conflict" description="In Ref. 1; BAA02015." evidence="6" ref="1">
    <original>ML</original>
    <variation>IV</variation>
    <location>
        <begin position="258"/>
        <end position="259"/>
    </location>
</feature>
<accession>P33288</accession>
<accession>Q7RVG1</accession>
<gene>
    <name type="primary">uvs-2</name>
    <name type="synonym">rad18</name>
    <name type="ORF">NCU05210</name>
</gene>
<dbReference type="EC" id="2.3.2.27"/>
<dbReference type="EMBL" id="D11458">
    <property type="protein sequence ID" value="BAA02015.1"/>
    <property type="molecule type" value="Genomic_DNA"/>
</dbReference>
<dbReference type="EMBL" id="CM002239">
    <property type="protein sequence ID" value="EAA32973.2"/>
    <property type="molecule type" value="Genomic_DNA"/>
</dbReference>
<dbReference type="PIR" id="S34825">
    <property type="entry name" value="S34825"/>
</dbReference>
<dbReference type="RefSeq" id="XP_962209.2">
    <property type="nucleotide sequence ID" value="XM_957116.3"/>
</dbReference>
<dbReference type="SMR" id="P33288"/>
<dbReference type="FunCoup" id="P33288">
    <property type="interactions" value="295"/>
</dbReference>
<dbReference type="STRING" id="367110.P33288"/>
<dbReference type="PaxDb" id="5141-EFNCRP00000005008"/>
<dbReference type="EnsemblFungi" id="EAA32973">
    <property type="protein sequence ID" value="EAA32973"/>
    <property type="gene ID" value="NCU05210"/>
</dbReference>
<dbReference type="GeneID" id="3878348"/>
<dbReference type="KEGG" id="ncr:NCU05210"/>
<dbReference type="VEuPathDB" id="FungiDB:NCU05210"/>
<dbReference type="HOGENOM" id="CLU_028491_2_0_1"/>
<dbReference type="InParanoid" id="P33288"/>
<dbReference type="OMA" id="IPNTGPR"/>
<dbReference type="OrthoDB" id="9049620at2759"/>
<dbReference type="UniPathway" id="UPA00143"/>
<dbReference type="Proteomes" id="UP000001805">
    <property type="component" value="Chromosome 4, Linkage Group IV"/>
</dbReference>
<dbReference type="GO" id="GO:0005634">
    <property type="term" value="C:nucleus"/>
    <property type="evidence" value="ECO:0000318"/>
    <property type="project" value="GO_Central"/>
</dbReference>
<dbReference type="GO" id="GO:0097505">
    <property type="term" value="C:Rad6-Rad18 complex"/>
    <property type="evidence" value="ECO:0000318"/>
    <property type="project" value="GO_Central"/>
</dbReference>
<dbReference type="GO" id="GO:0003697">
    <property type="term" value="F:single-stranded DNA binding"/>
    <property type="evidence" value="ECO:0007669"/>
    <property type="project" value="InterPro"/>
</dbReference>
<dbReference type="GO" id="GO:0061630">
    <property type="term" value="F:ubiquitin protein ligase activity"/>
    <property type="evidence" value="ECO:0007669"/>
    <property type="project" value="InterPro"/>
</dbReference>
<dbReference type="GO" id="GO:0008270">
    <property type="term" value="F:zinc ion binding"/>
    <property type="evidence" value="ECO:0007669"/>
    <property type="project" value="UniProtKB-KW"/>
</dbReference>
<dbReference type="GO" id="GO:0006301">
    <property type="term" value="P:postreplication repair"/>
    <property type="evidence" value="ECO:0000318"/>
    <property type="project" value="GO_Central"/>
</dbReference>
<dbReference type="GO" id="GO:0006513">
    <property type="term" value="P:protein monoubiquitination"/>
    <property type="evidence" value="ECO:0000318"/>
    <property type="project" value="GO_Central"/>
</dbReference>
<dbReference type="CDD" id="cd23148">
    <property type="entry name" value="RING-HC_ScRAD18-like"/>
    <property type="match status" value="1"/>
</dbReference>
<dbReference type="FunFam" id="3.30.40.10:FF:000172">
    <property type="entry name" value="E3 ubiquitin-protein ligase RAD18"/>
    <property type="match status" value="1"/>
</dbReference>
<dbReference type="Gene3D" id="3.30.40.10">
    <property type="entry name" value="Zinc/RING finger domain, C3HC4 (zinc finger)"/>
    <property type="match status" value="1"/>
</dbReference>
<dbReference type="InterPro" id="IPR039577">
    <property type="entry name" value="Rad18"/>
</dbReference>
<dbReference type="InterPro" id="IPR004580">
    <property type="entry name" value="Rad18_fungi"/>
</dbReference>
<dbReference type="InterPro" id="IPR006642">
    <property type="entry name" value="Rad18_UBZ4"/>
</dbReference>
<dbReference type="InterPro" id="IPR003034">
    <property type="entry name" value="SAP_dom"/>
</dbReference>
<dbReference type="InterPro" id="IPR001841">
    <property type="entry name" value="Znf_RING"/>
</dbReference>
<dbReference type="InterPro" id="IPR013083">
    <property type="entry name" value="Znf_RING/FYVE/PHD"/>
</dbReference>
<dbReference type="InterPro" id="IPR017907">
    <property type="entry name" value="Znf_RING_CS"/>
</dbReference>
<dbReference type="NCBIfam" id="TIGR00599">
    <property type="entry name" value="rad18"/>
    <property type="match status" value="1"/>
</dbReference>
<dbReference type="PANTHER" id="PTHR14134">
    <property type="entry name" value="E3 UBIQUITIN-PROTEIN LIGASE RAD18"/>
    <property type="match status" value="1"/>
</dbReference>
<dbReference type="PANTHER" id="PTHR14134:SF2">
    <property type="entry name" value="E3 UBIQUITIN-PROTEIN LIGASE RAD18"/>
    <property type="match status" value="1"/>
</dbReference>
<dbReference type="Pfam" id="PF02037">
    <property type="entry name" value="SAP"/>
    <property type="match status" value="1"/>
</dbReference>
<dbReference type="Pfam" id="PF13923">
    <property type="entry name" value="zf-C3HC4_2"/>
    <property type="match status" value="1"/>
</dbReference>
<dbReference type="SMART" id="SM00184">
    <property type="entry name" value="RING"/>
    <property type="match status" value="1"/>
</dbReference>
<dbReference type="SMART" id="SM00513">
    <property type="entry name" value="SAP"/>
    <property type="match status" value="1"/>
</dbReference>
<dbReference type="SMART" id="SM00734">
    <property type="entry name" value="ZnF_Rad18"/>
    <property type="match status" value="1"/>
</dbReference>
<dbReference type="SUPFAM" id="SSF57850">
    <property type="entry name" value="RING/U-box"/>
    <property type="match status" value="1"/>
</dbReference>
<dbReference type="PROSITE" id="PS50800">
    <property type="entry name" value="SAP"/>
    <property type="match status" value="1"/>
</dbReference>
<dbReference type="PROSITE" id="PS00518">
    <property type="entry name" value="ZF_RING_1"/>
    <property type="match status" value="1"/>
</dbReference>
<dbReference type="PROSITE" id="PS50089">
    <property type="entry name" value="ZF_RING_2"/>
    <property type="match status" value="1"/>
</dbReference>
<dbReference type="PROSITE" id="PS51908">
    <property type="entry name" value="ZF_UBZ4"/>
    <property type="match status" value="1"/>
</dbReference>
<organism>
    <name type="scientific">Neurospora crassa (strain ATCC 24698 / 74-OR23-1A / CBS 708.71 / DSM 1257 / FGSC 987)</name>
    <dbReference type="NCBI Taxonomy" id="367110"/>
    <lineage>
        <taxon>Eukaryota</taxon>
        <taxon>Fungi</taxon>
        <taxon>Dikarya</taxon>
        <taxon>Ascomycota</taxon>
        <taxon>Pezizomycotina</taxon>
        <taxon>Sordariomycetes</taxon>
        <taxon>Sordariomycetidae</taxon>
        <taxon>Sordariales</taxon>
        <taxon>Sordariaceae</taxon>
        <taxon>Neurospora</taxon>
    </lineage>
</organism>